<organism evidence="7">
    <name type="scientific">Flammulina velutipes</name>
    <name type="common">Agaricus velutipes</name>
    <dbReference type="NCBI Taxonomy" id="38945"/>
    <lineage>
        <taxon>Eukaryota</taxon>
        <taxon>Fungi</taxon>
        <taxon>Dikarya</taxon>
        <taxon>Basidiomycota</taxon>
        <taxon>Agaricomycotina</taxon>
        <taxon>Agaricomycetes</taxon>
        <taxon>Agaricomycetidae</taxon>
        <taxon>Agaricales</taxon>
        <taxon>Marasmiineae</taxon>
        <taxon>Physalacriaceae</taxon>
        <taxon>Flammulina</taxon>
    </lineage>
</organism>
<accession>A0A0A7AAW9</accession>
<dbReference type="EC" id="4.3.1.24" evidence="1"/>
<dbReference type="EMBL" id="KF737393">
    <property type="protein sequence ID" value="AHD25301.1"/>
    <property type="molecule type" value="Genomic_DNA"/>
</dbReference>
<dbReference type="SMR" id="A0A0A7AAW9"/>
<dbReference type="UniPathway" id="UPA00713">
    <property type="reaction ID" value="UER00725"/>
</dbReference>
<dbReference type="GO" id="GO:0005737">
    <property type="term" value="C:cytoplasm"/>
    <property type="evidence" value="ECO:0007669"/>
    <property type="project" value="UniProtKB-SubCell"/>
</dbReference>
<dbReference type="GO" id="GO:0045548">
    <property type="term" value="F:phenylalanine ammonia-lyase activity"/>
    <property type="evidence" value="ECO:0000250"/>
    <property type="project" value="UniProtKB"/>
</dbReference>
<dbReference type="GO" id="GO:0009800">
    <property type="term" value="P:cinnamic acid biosynthetic process"/>
    <property type="evidence" value="ECO:0007669"/>
    <property type="project" value="UniProtKB-UniPathway"/>
</dbReference>
<dbReference type="GO" id="GO:0006559">
    <property type="term" value="P:L-phenylalanine catabolic process"/>
    <property type="evidence" value="ECO:0007669"/>
    <property type="project" value="UniProtKB-KW"/>
</dbReference>
<dbReference type="CDD" id="cd00332">
    <property type="entry name" value="PAL-HAL"/>
    <property type="match status" value="1"/>
</dbReference>
<dbReference type="Gene3D" id="1.20.200.10">
    <property type="entry name" value="Fumarase/aspartase (Central domain)"/>
    <property type="match status" value="1"/>
</dbReference>
<dbReference type="Gene3D" id="1.10.275.10">
    <property type="entry name" value="Fumarase/aspartase (N-terminal domain)"/>
    <property type="match status" value="1"/>
</dbReference>
<dbReference type="Gene3D" id="1.10.274.20">
    <property type="entry name" value="Phenylalanine ammonia-lyase 1, domain 3"/>
    <property type="match status" value="1"/>
</dbReference>
<dbReference type="InterPro" id="IPR001106">
    <property type="entry name" value="Aromatic_Lyase"/>
</dbReference>
<dbReference type="InterPro" id="IPR024083">
    <property type="entry name" value="Fumarase/histidase_N"/>
</dbReference>
<dbReference type="InterPro" id="IPR008948">
    <property type="entry name" value="L-Aspartase-like"/>
</dbReference>
<dbReference type="InterPro" id="IPR022313">
    <property type="entry name" value="Phe/His_NH3-lyase_AS"/>
</dbReference>
<dbReference type="InterPro" id="IPR005922">
    <property type="entry name" value="Phe_NH3-lyase"/>
</dbReference>
<dbReference type="InterPro" id="IPR023144">
    <property type="entry name" value="Phe_NH3-lyase_shielding_dom_sf"/>
</dbReference>
<dbReference type="NCBIfam" id="TIGR01226">
    <property type="entry name" value="phe_am_lyase"/>
    <property type="match status" value="1"/>
</dbReference>
<dbReference type="PANTHER" id="PTHR10362">
    <property type="entry name" value="HISTIDINE AMMONIA-LYASE"/>
    <property type="match status" value="1"/>
</dbReference>
<dbReference type="Pfam" id="PF00221">
    <property type="entry name" value="Lyase_aromatic"/>
    <property type="match status" value="1"/>
</dbReference>
<dbReference type="SUPFAM" id="SSF48557">
    <property type="entry name" value="L-aspartase-like"/>
    <property type="match status" value="1"/>
</dbReference>
<dbReference type="PROSITE" id="PS00488">
    <property type="entry name" value="PAL_HISTIDASE"/>
    <property type="match status" value="1"/>
</dbReference>
<reference evidence="7" key="1">
    <citation type="journal article" date="2015" name="Mycobiology">
        <title>Cloning and Expression Analysis of Phenylalanine Ammonia-Lyase Gene in the Mycelium and Fruit Body of the Edible Mushroom Flammulina velutipes.</title>
        <authorList>
            <person name="Yun Y.H."/>
            <person name="Koo J.S."/>
            <person name="Kim S.H."/>
            <person name="Kong W.S."/>
        </authorList>
    </citation>
    <scope>NUCLEOTIDE SEQUENCE [GENOMIC DNA]</scope>
    <scope>DEVELOPMENTAL STAGE</scope>
    <scope>INDUCTION</scope>
</reference>
<sequence length="724" mass="78095">MPSELFDLDNARAARDTFLDARRTATLLHKFLDSHRELKSYKNGRTINVDGHTLSLAAVTAAARYNANVELSQSAQVKEGVEKSRAVIAEKVEQGTSVYGVSTGFGGSADTRTDQPLKLQQALLQHQHAGVLPSSSKTLGVLPLMDPMAATSMPEAWVRGAMLIRMNSLIRGHSGVRWELIEKINDLLRANITPVVPLRSSISASGDLSPLSYVAGTLTANPSIRVFDGPSAFGARKMVSSRDALAAHKIKPVTLASKEGLGILNGTAFSAAVASLALTEATHLALLAQVCTALGTEALCGTTGSYAPFIHVTARPHPGQIEAANNMWNLLQGSKLASGHEEEVSINQDKYELRQDRYPLRTSPQFLGPQIEDILAALASVTQECNSTTDNPLVDGNTGEVHHGGNFQAMAISNAMEKTRLAVHHIGKLMFSQSTELVNPAMNHGLPPSLAASDPSLNYHGKGVDIATAAYVSELGYLANPVTTHIQSAEMHNQAVNSLALISARATVTSLDVLTILMSSYLYLLCQAVDLRALRRDLDVGVRAIIAEEVSKLFSNNLSSEEMDLLHSSLYSKYQHTMDKTTTMDAVDQMKEVTASFAPMLVEVFTSTRVMPDALSAIPRFRSNISSRATQLFDRLRASYLSGERGATPASSLLGRTRSVYEFIRVSLGIRMHGSENYSAFANGLGVDDPTIGQNISSIYEAIRDGKFHDVVADLFEALPRSKL</sequence>
<proteinExistence type="evidence at transcript level"/>
<comment type="function">
    <text evidence="1 2">Catalyzes the non-oxidative deamination of L-phenylalanine to form trans-cinnamic acid and a free ammonium ion (By similarity). Facilitates the commitment step in phenylpropanoid pathways that produce secondary metabolites such as lignins, coumarins and flavonoids (By similarity).</text>
</comment>
<comment type="catalytic activity">
    <reaction evidence="1">
        <text>L-phenylalanine = (E)-cinnamate + NH4(+)</text>
        <dbReference type="Rhea" id="RHEA:21384"/>
        <dbReference type="ChEBI" id="CHEBI:15669"/>
        <dbReference type="ChEBI" id="CHEBI:28938"/>
        <dbReference type="ChEBI" id="CHEBI:58095"/>
        <dbReference type="EC" id="4.3.1.24"/>
    </reaction>
</comment>
<comment type="pathway">
    <text evidence="6">Phenylpropanoid metabolism; trans-cinnamate biosynthesis; trans-cinnamate from L-phenylalanine: step 1/1.</text>
</comment>
<comment type="subunit">
    <text evidence="2">Homotetramer.</text>
</comment>
<comment type="subcellular location">
    <subcellularLocation>
        <location evidence="6">Cytoplasm</location>
    </subcellularLocation>
</comment>
<comment type="developmental stage">
    <text evidence="4">Expression is the highest in mycelia, and decreases during fruiting body development (PubMed:26539050). In the fruiting body, present in the stipe but not in the pileus (PubMed:26539050).</text>
</comment>
<comment type="induction">
    <text evidence="4">Induced when grown in presence of ammonium nitrate, L-phenylalanine, L-tryptophan and L-tyrosine.</text>
</comment>
<comment type="PTM">
    <text evidence="3">Contains an active site 4-methylidene-imidazol-5-one (MIO), which is formed autocatalytically by cyclization and dehydration of residues Ala-Ser-Gly.</text>
</comment>
<comment type="similarity">
    <text evidence="6">Belongs to the PAL/histidase family.</text>
</comment>
<gene>
    <name evidence="7" type="primary">PAL1</name>
</gene>
<feature type="chain" id="PRO_0000454790" description="Phenylalanine ammonia-lyase">
    <location>
        <begin position="1"/>
        <end position="724"/>
    </location>
</feature>
<feature type="active site" description="Proton donor/acceptor" evidence="3">
    <location>
        <position position="99"/>
    </location>
</feature>
<feature type="binding site" evidence="3">
    <location>
        <position position="265"/>
    </location>
    <ligand>
        <name>(E)-cinnamate</name>
        <dbReference type="ChEBI" id="CHEBI:15669"/>
    </ligand>
</feature>
<feature type="binding site" evidence="3">
    <location>
        <position position="355"/>
    </location>
    <ligand>
        <name>(E)-cinnamate</name>
        <dbReference type="ChEBI" id="CHEBI:15669"/>
    </ligand>
</feature>
<feature type="binding site" evidence="3">
    <location>
        <position position="361"/>
    </location>
    <ligand>
        <name>(E)-cinnamate</name>
        <dbReference type="ChEBI" id="CHEBI:15669"/>
    </ligand>
</feature>
<feature type="binding site" evidence="3">
    <location>
        <position position="391"/>
    </location>
    <ligand>
        <name>(E)-cinnamate</name>
        <dbReference type="ChEBI" id="CHEBI:15669"/>
    </ligand>
</feature>
<feature type="binding site" evidence="2">
    <location>
        <position position="462"/>
    </location>
    <ligand>
        <name>(E)-cinnamate</name>
        <dbReference type="ChEBI" id="CHEBI:15669"/>
    </ligand>
</feature>
<feature type="binding site" evidence="2">
    <location>
        <position position="490"/>
    </location>
    <ligand>
        <name>(E)-cinnamate</name>
        <dbReference type="ChEBI" id="CHEBI:15669"/>
    </ligand>
</feature>
<feature type="binding site" evidence="3">
    <location>
        <position position="493"/>
    </location>
    <ligand>
        <name>(E)-cinnamate</name>
        <dbReference type="ChEBI" id="CHEBI:15669"/>
    </ligand>
</feature>
<feature type="modified residue" description="2,3-didehydroalanine (Ser)" evidence="3">
    <location>
        <position position="205"/>
    </location>
</feature>
<feature type="cross-link" description="5-imidazolinone (Ala-Gly)" evidence="3">
    <location>
        <begin position="204"/>
        <end position="206"/>
    </location>
</feature>
<keyword id="KW-0963">Cytoplasm</keyword>
<keyword id="KW-0456">Lyase</keyword>
<keyword id="KW-0585">Phenylalanine catabolism</keyword>
<keyword id="KW-0587">Phenylpropanoid metabolism</keyword>
<protein>
    <recommendedName>
        <fullName evidence="5">Phenylalanine ammonia-lyase</fullName>
        <ecNumber evidence="1">4.3.1.24</ecNumber>
    </recommendedName>
    <alternativeName>
        <fullName evidence="5">FvPAL</fullName>
    </alternativeName>
</protein>
<name>PALY_FLAVE</name>
<evidence type="ECO:0000250" key="1">
    <source>
        <dbReference type="UniProtKB" id="A0A4Y6HUI7"/>
    </source>
</evidence>
<evidence type="ECO:0000250" key="2">
    <source>
        <dbReference type="UniProtKB" id="P11544"/>
    </source>
</evidence>
<evidence type="ECO:0000250" key="3">
    <source>
        <dbReference type="UniProtKB" id="Q68G84"/>
    </source>
</evidence>
<evidence type="ECO:0000269" key="4">
    <source>
    </source>
</evidence>
<evidence type="ECO:0000303" key="5">
    <source>
    </source>
</evidence>
<evidence type="ECO:0000305" key="6"/>
<evidence type="ECO:0000312" key="7">
    <source>
        <dbReference type="EMBL" id="AHD25301.1"/>
    </source>
</evidence>